<feature type="chain" id="PRO_1000012084" description="Bis(5'-nucleosyl)-tetraphosphatase, symmetrical">
    <location>
        <begin position="1"/>
        <end position="276"/>
    </location>
</feature>
<accession>A1STS0</accession>
<name>APAH_PSYIN</name>
<comment type="function">
    <text evidence="1">Hydrolyzes diadenosine 5',5'''-P1,P4-tetraphosphate to yield ADP.</text>
</comment>
<comment type="catalytic activity">
    <reaction evidence="1">
        <text>P(1),P(4)-bis(5'-adenosyl) tetraphosphate + H2O = 2 ADP + 2 H(+)</text>
        <dbReference type="Rhea" id="RHEA:24252"/>
        <dbReference type="ChEBI" id="CHEBI:15377"/>
        <dbReference type="ChEBI" id="CHEBI:15378"/>
        <dbReference type="ChEBI" id="CHEBI:58141"/>
        <dbReference type="ChEBI" id="CHEBI:456216"/>
        <dbReference type="EC" id="3.6.1.41"/>
    </reaction>
</comment>
<comment type="similarity">
    <text evidence="1">Belongs to the Ap4A hydrolase family.</text>
</comment>
<sequence>MATYIVGDVHGCFDELQALLELAQFKKNKDQLWITGDLVGRGPKSLETLRFVKSLGDSAKIVLGNHDLHLLAIHQGIHSDKESDKLSALLNAPDCDELLTWLRFQPLFRRHPEFNFVMVHAGISPQWTIQQAQGYAQEVQNILQGNEFKKLLKNMYGNHPASWNDSSQGIKRLRFIINALTRMRYCLLDGSLEFYSKLAPEQTDSTIIKPWFEINTLDQSSDIIFGHWAALLGTGTKQGIYALDTGCVWGNSLSMLRWQDKKMFSFACQRQRVHSK</sequence>
<evidence type="ECO:0000255" key="1">
    <source>
        <dbReference type="HAMAP-Rule" id="MF_00199"/>
    </source>
</evidence>
<reference key="1">
    <citation type="journal article" date="2008" name="BMC Genomics">
        <title>Genomics of an extreme psychrophile, Psychromonas ingrahamii.</title>
        <authorList>
            <person name="Riley M."/>
            <person name="Staley J.T."/>
            <person name="Danchin A."/>
            <person name="Wang T.Z."/>
            <person name="Brettin T.S."/>
            <person name="Hauser L.J."/>
            <person name="Land M.L."/>
            <person name="Thompson L.S."/>
        </authorList>
    </citation>
    <scope>NUCLEOTIDE SEQUENCE [LARGE SCALE GENOMIC DNA]</scope>
    <source>
        <strain>DSM 17664 / CCUG 51855 / 37</strain>
    </source>
</reference>
<proteinExistence type="inferred from homology"/>
<keyword id="KW-0378">Hydrolase</keyword>
<keyword id="KW-1185">Reference proteome</keyword>
<dbReference type="EC" id="3.6.1.41" evidence="1"/>
<dbReference type="EMBL" id="CP000510">
    <property type="protein sequence ID" value="ABM02885.1"/>
    <property type="molecule type" value="Genomic_DNA"/>
</dbReference>
<dbReference type="RefSeq" id="WP_011769448.1">
    <property type="nucleotide sequence ID" value="NC_008709.1"/>
</dbReference>
<dbReference type="SMR" id="A1STS0"/>
<dbReference type="STRING" id="357804.Ping_1046"/>
<dbReference type="KEGG" id="pin:Ping_1046"/>
<dbReference type="eggNOG" id="COG0639">
    <property type="taxonomic scope" value="Bacteria"/>
</dbReference>
<dbReference type="HOGENOM" id="CLU_056184_2_0_6"/>
<dbReference type="OrthoDB" id="9807890at2"/>
<dbReference type="Proteomes" id="UP000000639">
    <property type="component" value="Chromosome"/>
</dbReference>
<dbReference type="GO" id="GO:0008803">
    <property type="term" value="F:bis(5'-nucleosyl)-tetraphosphatase (symmetrical) activity"/>
    <property type="evidence" value="ECO:0007669"/>
    <property type="project" value="UniProtKB-UniRule"/>
</dbReference>
<dbReference type="CDD" id="cd07422">
    <property type="entry name" value="MPP_ApaH"/>
    <property type="match status" value="1"/>
</dbReference>
<dbReference type="Gene3D" id="3.60.21.10">
    <property type="match status" value="1"/>
</dbReference>
<dbReference type="HAMAP" id="MF_00199">
    <property type="entry name" value="ApaH"/>
    <property type="match status" value="1"/>
</dbReference>
<dbReference type="InterPro" id="IPR004617">
    <property type="entry name" value="ApaH"/>
</dbReference>
<dbReference type="InterPro" id="IPR004843">
    <property type="entry name" value="Calcineurin-like_PHP_ApaH"/>
</dbReference>
<dbReference type="InterPro" id="IPR029052">
    <property type="entry name" value="Metallo-depent_PP-like"/>
</dbReference>
<dbReference type="NCBIfam" id="TIGR00668">
    <property type="entry name" value="apaH"/>
    <property type="match status" value="1"/>
</dbReference>
<dbReference type="NCBIfam" id="NF001204">
    <property type="entry name" value="PRK00166.1"/>
    <property type="match status" value="1"/>
</dbReference>
<dbReference type="PANTHER" id="PTHR40942">
    <property type="match status" value="1"/>
</dbReference>
<dbReference type="PANTHER" id="PTHR40942:SF4">
    <property type="entry name" value="CYTOCHROME C5"/>
    <property type="match status" value="1"/>
</dbReference>
<dbReference type="Pfam" id="PF00149">
    <property type="entry name" value="Metallophos"/>
    <property type="match status" value="1"/>
</dbReference>
<dbReference type="PIRSF" id="PIRSF000903">
    <property type="entry name" value="B5n-ttraPtase_sm"/>
    <property type="match status" value="1"/>
</dbReference>
<dbReference type="SUPFAM" id="SSF56300">
    <property type="entry name" value="Metallo-dependent phosphatases"/>
    <property type="match status" value="1"/>
</dbReference>
<gene>
    <name evidence="1" type="primary">apaH</name>
    <name type="ordered locus">Ping_1046</name>
</gene>
<protein>
    <recommendedName>
        <fullName evidence="1">Bis(5'-nucleosyl)-tetraphosphatase, symmetrical</fullName>
        <ecNumber evidence="1">3.6.1.41</ecNumber>
    </recommendedName>
    <alternativeName>
        <fullName evidence="1">Ap4A hydrolase</fullName>
    </alternativeName>
    <alternativeName>
        <fullName evidence="1">Diadenosine 5',5'''-P1,P4-tetraphosphate pyrophosphohydrolase</fullName>
    </alternativeName>
    <alternativeName>
        <fullName evidence="1">Diadenosine tetraphosphatase</fullName>
    </alternativeName>
</protein>
<organism>
    <name type="scientific">Psychromonas ingrahamii (strain DSM 17664 / CCUG 51855 / 37)</name>
    <dbReference type="NCBI Taxonomy" id="357804"/>
    <lineage>
        <taxon>Bacteria</taxon>
        <taxon>Pseudomonadati</taxon>
        <taxon>Pseudomonadota</taxon>
        <taxon>Gammaproteobacteria</taxon>
        <taxon>Alteromonadales</taxon>
        <taxon>Psychromonadaceae</taxon>
        <taxon>Psychromonas</taxon>
    </lineage>
</organism>